<protein>
    <recommendedName>
        <fullName>Zinc finger protein 496</fullName>
    </recommendedName>
    <alternativeName>
        <fullName>NSD1-interacting zinc finger protein 1</fullName>
    </alternativeName>
    <alternativeName>
        <fullName>Zinc finger protein with KRAB and SCAN domains 17</fullName>
    </alternativeName>
</protein>
<reference key="1">
    <citation type="journal article" date="2004" name="Mol. Cell. Biol.">
        <title>Nizp1, a novel multitype zinc finger protein that interacts with the NSD1 histone lysine methyltransferase through a unique C2HR motif.</title>
        <authorList>
            <person name="Nielsen A.L."/>
            <person name="Jorgensen P."/>
            <person name="Lerouge T."/>
            <person name="Cervino M."/>
            <person name="Chambon P."/>
            <person name="Losson R."/>
        </authorList>
    </citation>
    <scope>NUCLEOTIDE SEQUENCE [MRNA] (ISOFORM 1)</scope>
    <scope>FUNCTION</scope>
    <scope>SUBCELLULAR LOCATION</scope>
    <scope>INTERACTION WITH NSD1</scope>
</reference>
<reference key="2">
    <citation type="journal article" date="2005" name="Science">
        <title>The transcriptional landscape of the mammalian genome.</title>
        <authorList>
            <person name="Carninci P."/>
            <person name="Kasukawa T."/>
            <person name="Katayama S."/>
            <person name="Gough J."/>
            <person name="Frith M.C."/>
            <person name="Maeda N."/>
            <person name="Oyama R."/>
            <person name="Ravasi T."/>
            <person name="Lenhard B."/>
            <person name="Wells C."/>
            <person name="Kodzius R."/>
            <person name="Shimokawa K."/>
            <person name="Bajic V.B."/>
            <person name="Brenner S.E."/>
            <person name="Batalov S."/>
            <person name="Forrest A.R."/>
            <person name="Zavolan M."/>
            <person name="Davis M.J."/>
            <person name="Wilming L.G."/>
            <person name="Aidinis V."/>
            <person name="Allen J.E."/>
            <person name="Ambesi-Impiombato A."/>
            <person name="Apweiler R."/>
            <person name="Aturaliya R.N."/>
            <person name="Bailey T.L."/>
            <person name="Bansal M."/>
            <person name="Baxter L."/>
            <person name="Beisel K.W."/>
            <person name="Bersano T."/>
            <person name="Bono H."/>
            <person name="Chalk A.M."/>
            <person name="Chiu K.P."/>
            <person name="Choudhary V."/>
            <person name="Christoffels A."/>
            <person name="Clutterbuck D.R."/>
            <person name="Crowe M.L."/>
            <person name="Dalla E."/>
            <person name="Dalrymple B.P."/>
            <person name="de Bono B."/>
            <person name="Della Gatta G."/>
            <person name="di Bernardo D."/>
            <person name="Down T."/>
            <person name="Engstrom P."/>
            <person name="Fagiolini M."/>
            <person name="Faulkner G."/>
            <person name="Fletcher C.F."/>
            <person name="Fukushima T."/>
            <person name="Furuno M."/>
            <person name="Futaki S."/>
            <person name="Gariboldi M."/>
            <person name="Georgii-Hemming P."/>
            <person name="Gingeras T.R."/>
            <person name="Gojobori T."/>
            <person name="Green R.E."/>
            <person name="Gustincich S."/>
            <person name="Harbers M."/>
            <person name="Hayashi Y."/>
            <person name="Hensch T.K."/>
            <person name="Hirokawa N."/>
            <person name="Hill D."/>
            <person name="Huminiecki L."/>
            <person name="Iacono M."/>
            <person name="Ikeo K."/>
            <person name="Iwama A."/>
            <person name="Ishikawa T."/>
            <person name="Jakt M."/>
            <person name="Kanapin A."/>
            <person name="Katoh M."/>
            <person name="Kawasawa Y."/>
            <person name="Kelso J."/>
            <person name="Kitamura H."/>
            <person name="Kitano H."/>
            <person name="Kollias G."/>
            <person name="Krishnan S.P."/>
            <person name="Kruger A."/>
            <person name="Kummerfeld S.K."/>
            <person name="Kurochkin I.V."/>
            <person name="Lareau L.F."/>
            <person name="Lazarevic D."/>
            <person name="Lipovich L."/>
            <person name="Liu J."/>
            <person name="Liuni S."/>
            <person name="McWilliam S."/>
            <person name="Madan Babu M."/>
            <person name="Madera M."/>
            <person name="Marchionni L."/>
            <person name="Matsuda H."/>
            <person name="Matsuzawa S."/>
            <person name="Miki H."/>
            <person name="Mignone F."/>
            <person name="Miyake S."/>
            <person name="Morris K."/>
            <person name="Mottagui-Tabar S."/>
            <person name="Mulder N."/>
            <person name="Nakano N."/>
            <person name="Nakauchi H."/>
            <person name="Ng P."/>
            <person name="Nilsson R."/>
            <person name="Nishiguchi S."/>
            <person name="Nishikawa S."/>
            <person name="Nori F."/>
            <person name="Ohara O."/>
            <person name="Okazaki Y."/>
            <person name="Orlando V."/>
            <person name="Pang K.C."/>
            <person name="Pavan W.J."/>
            <person name="Pavesi G."/>
            <person name="Pesole G."/>
            <person name="Petrovsky N."/>
            <person name="Piazza S."/>
            <person name="Reed J."/>
            <person name="Reid J.F."/>
            <person name="Ring B.Z."/>
            <person name="Ringwald M."/>
            <person name="Rost B."/>
            <person name="Ruan Y."/>
            <person name="Salzberg S.L."/>
            <person name="Sandelin A."/>
            <person name="Schneider C."/>
            <person name="Schoenbach C."/>
            <person name="Sekiguchi K."/>
            <person name="Semple C.A."/>
            <person name="Seno S."/>
            <person name="Sessa L."/>
            <person name="Sheng Y."/>
            <person name="Shibata Y."/>
            <person name="Shimada H."/>
            <person name="Shimada K."/>
            <person name="Silva D."/>
            <person name="Sinclair B."/>
            <person name="Sperling S."/>
            <person name="Stupka E."/>
            <person name="Sugiura K."/>
            <person name="Sultana R."/>
            <person name="Takenaka Y."/>
            <person name="Taki K."/>
            <person name="Tammoja K."/>
            <person name="Tan S.L."/>
            <person name="Tang S."/>
            <person name="Taylor M.S."/>
            <person name="Tegner J."/>
            <person name="Teichmann S.A."/>
            <person name="Ueda H.R."/>
            <person name="van Nimwegen E."/>
            <person name="Verardo R."/>
            <person name="Wei C.L."/>
            <person name="Yagi K."/>
            <person name="Yamanishi H."/>
            <person name="Zabarovsky E."/>
            <person name="Zhu S."/>
            <person name="Zimmer A."/>
            <person name="Hide W."/>
            <person name="Bult C."/>
            <person name="Grimmond S.M."/>
            <person name="Teasdale R.D."/>
            <person name="Liu E.T."/>
            <person name="Brusic V."/>
            <person name="Quackenbush J."/>
            <person name="Wahlestedt C."/>
            <person name="Mattick J.S."/>
            <person name="Hume D.A."/>
            <person name="Kai C."/>
            <person name="Sasaki D."/>
            <person name="Tomaru Y."/>
            <person name="Fukuda S."/>
            <person name="Kanamori-Katayama M."/>
            <person name="Suzuki M."/>
            <person name="Aoki J."/>
            <person name="Arakawa T."/>
            <person name="Iida J."/>
            <person name="Imamura K."/>
            <person name="Itoh M."/>
            <person name="Kato T."/>
            <person name="Kawaji H."/>
            <person name="Kawagashira N."/>
            <person name="Kawashima T."/>
            <person name="Kojima M."/>
            <person name="Kondo S."/>
            <person name="Konno H."/>
            <person name="Nakano K."/>
            <person name="Ninomiya N."/>
            <person name="Nishio T."/>
            <person name="Okada M."/>
            <person name="Plessy C."/>
            <person name="Shibata K."/>
            <person name="Shiraki T."/>
            <person name="Suzuki S."/>
            <person name="Tagami M."/>
            <person name="Waki K."/>
            <person name="Watahiki A."/>
            <person name="Okamura-Oho Y."/>
            <person name="Suzuki H."/>
            <person name="Kawai J."/>
            <person name="Hayashizaki Y."/>
        </authorList>
    </citation>
    <scope>NUCLEOTIDE SEQUENCE [LARGE SCALE MRNA] (ISOFORMS 1; 2 AND 3)</scope>
    <source>
        <strain>C57BL/6J</strain>
        <strain>NOD</strain>
        <tissue>Brain cortex</tissue>
        <tissue>Spinal ganglion</tissue>
    </source>
</reference>
<reference key="3">
    <citation type="journal article" date="2009" name="PLoS Biol.">
        <title>Lineage-specific biology revealed by a finished genome assembly of the mouse.</title>
        <authorList>
            <person name="Church D.M."/>
            <person name="Goodstadt L."/>
            <person name="Hillier L.W."/>
            <person name="Zody M.C."/>
            <person name="Goldstein S."/>
            <person name="She X."/>
            <person name="Bult C.J."/>
            <person name="Agarwala R."/>
            <person name="Cherry J.L."/>
            <person name="DiCuccio M."/>
            <person name="Hlavina W."/>
            <person name="Kapustin Y."/>
            <person name="Meric P."/>
            <person name="Maglott D."/>
            <person name="Birtle Z."/>
            <person name="Marques A.C."/>
            <person name="Graves T."/>
            <person name="Zhou S."/>
            <person name="Teague B."/>
            <person name="Potamousis K."/>
            <person name="Churas C."/>
            <person name="Place M."/>
            <person name="Herschleb J."/>
            <person name="Runnheim R."/>
            <person name="Forrest D."/>
            <person name="Amos-Landgraf J."/>
            <person name="Schwartz D.C."/>
            <person name="Cheng Z."/>
            <person name="Lindblad-Toh K."/>
            <person name="Eichler E.E."/>
            <person name="Ponting C.P."/>
        </authorList>
    </citation>
    <scope>NUCLEOTIDE SEQUENCE [LARGE SCALE GENOMIC DNA]</scope>
    <source>
        <strain>C57BL/6J</strain>
    </source>
</reference>
<reference key="4">
    <citation type="journal article" date="2004" name="Genome Res.">
        <title>The status, quality, and expansion of the NIH full-length cDNA project: the Mammalian Gene Collection (MGC).</title>
        <authorList>
            <consortium name="The MGC Project Team"/>
        </authorList>
    </citation>
    <scope>NUCLEOTIDE SEQUENCE [LARGE SCALE MRNA] (ISOFORM 1)</scope>
    <source>
        <strain>FVB/N</strain>
        <tissue>Mammary tumor</tissue>
    </source>
</reference>
<reference key="5">
    <citation type="journal article" date="2007" name="FEBS Lett.">
        <title>Characterization of zinc finger protein 496 that interacts with Jumonji/JARID2.</title>
        <authorList>
            <person name="Mysliwiec M.R."/>
            <person name="Kim T.G."/>
            <person name="Lee Y."/>
        </authorList>
    </citation>
    <scope>FUNCTION</scope>
    <scope>SUBCELLULAR LOCATION</scope>
    <scope>INTERACTION WITH JARID2</scope>
</reference>
<reference key="6">
    <citation type="journal article" date="2010" name="Cell">
        <title>A tissue-specific atlas of mouse protein phosphorylation and expression.</title>
        <authorList>
            <person name="Huttlin E.L."/>
            <person name="Jedrychowski M.P."/>
            <person name="Elias J.E."/>
            <person name="Goswami T."/>
            <person name="Rad R."/>
            <person name="Beausoleil S.A."/>
            <person name="Villen J."/>
            <person name="Haas W."/>
            <person name="Sowa M.E."/>
            <person name="Gygi S.P."/>
        </authorList>
    </citation>
    <scope>PHOSPHORYLATION [LARGE SCALE ANALYSIS] AT SER-182</scope>
    <scope>IDENTIFICATION BY MASS SPECTROMETRY [LARGE SCALE ANALYSIS]</scope>
    <source>
        <tissue>Kidney</tissue>
    </source>
</reference>
<name>ZN496_MOUSE</name>
<sequence>MPTALCPRVLAPKESEEPRKMRSPPGENPSPQGEPPSPESSRRLFRRFRYQEAAGPREALQRLWELCRGWLRLERHTKEQILELLVLEQFLAILPWEIQSWVRAQEPESGEQAVAAVEALEREPGRPWQWLKHCEDPVVIDDGDGPAAPQDLEQERMSAESQSYPDAPPGALVQGTGLLSRSPGQPSEDLVPQDAFVVQEQSIRDAQPVATCQLPPNRVSPFKDMILCFSEEDWSLLDPAQTGFYGEFIIGEDYAVSMPPNEPPVQPGHSHEEENGLRVTEWTTDLQDKEIPQASCLDLSSLQPFQGEERRKWEELQVPELQPCPQVVLSQSPCPAGGDPPALKSSLDQEVTIEIVLSSSGDEDSQHSPYCTEELRSPPEDLHSVPAHQSNASAEGEVQTSQKSYVCPNCGKIFRWRVNFIRHLRSRREQKPHKCSVCGELFSDSEDLDGHLETHEAQKPYRCTACGKSFRLNSHLISHRRIHLQPASQQPMKKSEEEALETEGTGASDLLEKSKAKLSFQCGDCEKSFQRHDHLVRHRRHCHLKDETRPFQCRYCVKTFRQNYDLLRHERLHMKRRSKQALNSY</sequence>
<organism>
    <name type="scientific">Mus musculus</name>
    <name type="common">Mouse</name>
    <dbReference type="NCBI Taxonomy" id="10090"/>
    <lineage>
        <taxon>Eukaryota</taxon>
        <taxon>Metazoa</taxon>
        <taxon>Chordata</taxon>
        <taxon>Craniata</taxon>
        <taxon>Vertebrata</taxon>
        <taxon>Euteleostomi</taxon>
        <taxon>Mammalia</taxon>
        <taxon>Eutheria</taxon>
        <taxon>Euarchontoglires</taxon>
        <taxon>Glires</taxon>
        <taxon>Rodentia</taxon>
        <taxon>Myomorpha</taxon>
        <taxon>Muroidea</taxon>
        <taxon>Muridae</taxon>
        <taxon>Murinae</taxon>
        <taxon>Mus</taxon>
        <taxon>Mus</taxon>
    </lineage>
</organism>
<comment type="function">
    <text evidence="6 7">DNA-binding transcription factor that can both act as an activator and a repressor.</text>
</comment>
<comment type="subunit">
    <text evidence="6 7">Interacts (via zinc-fingers) with JARID2. Interacts with NSD1.</text>
</comment>
<comment type="interaction">
    <interactant intactId="EBI-7417351">
        <id>Q5SXI5</id>
    </interactant>
    <interactant intactId="EBI-493592">
        <id>Q62315</id>
        <label>Jarid2</label>
    </interactant>
    <organismsDiffer>false</organismsDiffer>
    <experiments>6</experiments>
</comment>
<comment type="subcellular location">
    <subcellularLocation>
        <location evidence="4 6 7">Nucleus</location>
    </subcellularLocation>
</comment>
<comment type="alternative products">
    <event type="alternative splicing"/>
    <isoform>
        <id>Q5SXI5-1</id>
        <name>1</name>
        <sequence type="displayed"/>
    </isoform>
    <isoform>
        <id>Q5SXI5-2</id>
        <name>2</name>
        <sequence type="described" ref="VSP_038769"/>
    </isoform>
    <isoform>
        <id>Q5SXI5-3</id>
        <name>3</name>
        <sequence type="described" ref="VSP_038768"/>
    </isoform>
</comment>
<comment type="domain">
    <text>The C2H2-type zinc finger 1, also named C2HR, mediates the interaction with NSD1.</text>
</comment>
<comment type="similarity">
    <text evidence="9">Belongs to the krueppel C2H2-type zinc-finger protein family.</text>
</comment>
<keyword id="KW-0002">3D-structure</keyword>
<keyword id="KW-0010">Activator</keyword>
<keyword id="KW-0025">Alternative splicing</keyword>
<keyword id="KW-0238">DNA-binding</keyword>
<keyword id="KW-1017">Isopeptide bond</keyword>
<keyword id="KW-0479">Metal-binding</keyword>
<keyword id="KW-0539">Nucleus</keyword>
<keyword id="KW-0597">Phosphoprotein</keyword>
<keyword id="KW-1185">Reference proteome</keyword>
<keyword id="KW-0677">Repeat</keyword>
<keyword id="KW-0678">Repressor</keyword>
<keyword id="KW-0804">Transcription</keyword>
<keyword id="KW-0805">Transcription regulation</keyword>
<keyword id="KW-0832">Ubl conjugation</keyword>
<keyword id="KW-0862">Zinc</keyword>
<keyword id="KW-0863">Zinc-finger</keyword>
<feature type="chain" id="PRO_0000391906" description="Zinc finger protein 496">
    <location>
        <begin position="1"/>
        <end position="585"/>
    </location>
</feature>
<feature type="domain" description="SCAN box" evidence="4">
    <location>
        <begin position="42"/>
        <end position="124"/>
    </location>
</feature>
<feature type="domain" description="KRAB" evidence="3">
    <location>
        <begin position="220"/>
        <end position="294"/>
    </location>
</feature>
<feature type="zinc finger region" description="C2H2-type 1; degenerate" evidence="2">
    <location>
        <begin position="405"/>
        <end position="427"/>
    </location>
</feature>
<feature type="zinc finger region" description="C2H2-type 2" evidence="2">
    <location>
        <begin position="433"/>
        <end position="455"/>
    </location>
</feature>
<feature type="zinc finger region" description="C2H2-type 3" evidence="2">
    <location>
        <begin position="461"/>
        <end position="483"/>
    </location>
</feature>
<feature type="zinc finger region" description="C2H2-type 4" evidence="2">
    <location>
        <begin position="520"/>
        <end position="543"/>
    </location>
</feature>
<feature type="zinc finger region" description="C2H2-type 5" evidence="2">
    <location>
        <begin position="551"/>
        <end position="573"/>
    </location>
</feature>
<feature type="region of interest" description="Disordered" evidence="5">
    <location>
        <begin position="1"/>
        <end position="41"/>
    </location>
</feature>
<feature type="region of interest" description="Disordered" evidence="5">
    <location>
        <begin position="141"/>
        <end position="167"/>
    </location>
</feature>
<feature type="region of interest" description="Disordered" evidence="5">
    <location>
        <begin position="358"/>
        <end position="397"/>
    </location>
</feature>
<feature type="region of interest" description="Disordered" evidence="5">
    <location>
        <begin position="483"/>
        <end position="506"/>
    </location>
</feature>
<feature type="short sequence motif" description="Nuclear localization signal">
    <location>
        <begin position="575"/>
        <end position="579"/>
    </location>
</feature>
<feature type="compositionally biased region" description="Basic and acidic residues" evidence="5">
    <location>
        <begin position="11"/>
        <end position="20"/>
    </location>
</feature>
<feature type="compositionally biased region" description="Pro residues" evidence="5">
    <location>
        <begin position="26"/>
        <end position="38"/>
    </location>
</feature>
<feature type="compositionally biased region" description="Basic and acidic residues" evidence="5">
    <location>
        <begin position="373"/>
        <end position="383"/>
    </location>
</feature>
<feature type="compositionally biased region" description="Polar residues" evidence="5">
    <location>
        <begin position="387"/>
        <end position="397"/>
    </location>
</feature>
<feature type="modified residue" description="Phosphoserine" evidence="10">
    <location>
        <position position="182"/>
    </location>
</feature>
<feature type="cross-link" description="Glycyl lysine isopeptide (Lys-Gly) (interchain with G-Cter in SUMO2)" evidence="1">
    <location>
        <position position="13"/>
    </location>
</feature>
<feature type="cross-link" description="Glycyl lysine isopeptide (Lys-Gly) (interchain with G-Cter in SUMO2)" evidence="1">
    <location>
        <position position="494"/>
    </location>
</feature>
<feature type="splice variant" id="VSP_038768" description="In isoform 3." evidence="8">
    <location>
        <begin position="1"/>
        <end position="156"/>
    </location>
</feature>
<feature type="splice variant" id="VSP_038769" description="In isoform 2." evidence="8">
    <location>
        <begin position="1"/>
        <end position="20"/>
    </location>
</feature>
<feature type="sequence conflict" description="In Ref. 4; AAH40205." evidence="9" ref="4">
    <original>A</original>
    <variation>T</variation>
    <location>
        <position position="499"/>
    </location>
</feature>
<feature type="turn" evidence="11">
    <location>
        <begin position="408"/>
        <end position="410"/>
    </location>
</feature>
<feature type="strand" evidence="11">
    <location>
        <begin position="413"/>
        <end position="415"/>
    </location>
</feature>
<feature type="helix" evidence="11">
    <location>
        <begin position="417"/>
        <end position="425"/>
    </location>
</feature>
<feature type="helix" evidence="11">
    <location>
        <begin position="426"/>
        <end position="429"/>
    </location>
</feature>
<proteinExistence type="evidence at protein level"/>
<gene>
    <name type="primary">Znf496</name>
    <name type="synonym">Nizp11</name>
    <name type="synonym">Zfp496</name>
    <name type="synonym">Zkscan17</name>
</gene>
<accession>Q5SXI5</accession>
<accession>Q3TC40</accession>
<accession>Q3UTL1</accession>
<accession>Q8BKK0</accession>
<accession>Q8CGF9</accession>
<evidence type="ECO:0000250" key="1">
    <source>
        <dbReference type="UniProtKB" id="Q96IT1"/>
    </source>
</evidence>
<evidence type="ECO:0000255" key="2">
    <source>
        <dbReference type="PROSITE-ProRule" id="PRU00042"/>
    </source>
</evidence>
<evidence type="ECO:0000255" key="3">
    <source>
        <dbReference type="PROSITE-ProRule" id="PRU00119"/>
    </source>
</evidence>
<evidence type="ECO:0000255" key="4">
    <source>
        <dbReference type="PROSITE-ProRule" id="PRU00187"/>
    </source>
</evidence>
<evidence type="ECO:0000256" key="5">
    <source>
        <dbReference type="SAM" id="MobiDB-lite"/>
    </source>
</evidence>
<evidence type="ECO:0000269" key="6">
    <source>
    </source>
</evidence>
<evidence type="ECO:0000269" key="7">
    <source>
    </source>
</evidence>
<evidence type="ECO:0000303" key="8">
    <source>
    </source>
</evidence>
<evidence type="ECO:0000305" key="9"/>
<evidence type="ECO:0007744" key="10">
    <source>
    </source>
</evidence>
<evidence type="ECO:0007829" key="11">
    <source>
        <dbReference type="PDB" id="2NAB"/>
    </source>
</evidence>
<dbReference type="EMBL" id="AY302242">
    <property type="protein sequence ID" value="AAQ73562.1"/>
    <property type="molecule type" value="mRNA"/>
</dbReference>
<dbReference type="EMBL" id="AK051711">
    <property type="protein sequence ID" value="BAC34730.1"/>
    <property type="molecule type" value="mRNA"/>
</dbReference>
<dbReference type="EMBL" id="AK139346">
    <property type="protein sequence ID" value="BAE23969.1"/>
    <property type="molecule type" value="mRNA"/>
</dbReference>
<dbReference type="EMBL" id="AK155196">
    <property type="protein sequence ID" value="BAE33110.1"/>
    <property type="molecule type" value="mRNA"/>
</dbReference>
<dbReference type="EMBL" id="AK155490">
    <property type="protein sequence ID" value="BAE33290.1"/>
    <property type="molecule type" value="mRNA"/>
</dbReference>
<dbReference type="EMBL" id="AK170924">
    <property type="protein sequence ID" value="BAE42117.1"/>
    <property type="molecule type" value="mRNA"/>
</dbReference>
<dbReference type="EMBL" id="AK170989">
    <property type="protein sequence ID" value="BAE42163.1"/>
    <property type="molecule type" value="mRNA"/>
</dbReference>
<dbReference type="EMBL" id="AK171190">
    <property type="protein sequence ID" value="BAE42300.1"/>
    <property type="molecule type" value="mRNA"/>
</dbReference>
<dbReference type="EMBL" id="AL592522">
    <property type="status" value="NOT_ANNOTATED_CDS"/>
    <property type="molecule type" value="Genomic_DNA"/>
</dbReference>
<dbReference type="EMBL" id="BC040205">
    <property type="protein sequence ID" value="AAH40205.1"/>
    <property type="molecule type" value="mRNA"/>
</dbReference>
<dbReference type="CCDS" id="CCDS24770.1">
    <molecule id="Q5SXI5-1"/>
</dbReference>
<dbReference type="CCDS" id="CCDS70197.1">
    <molecule id="Q5SXI5-3"/>
</dbReference>
<dbReference type="RefSeq" id="NP_001124001.1">
    <molecule id="Q5SXI5-2"/>
    <property type="nucleotide sequence ID" value="NM_001130529.2"/>
</dbReference>
<dbReference type="RefSeq" id="NP_001277943.1">
    <molecule id="Q5SXI5-3"/>
    <property type="nucleotide sequence ID" value="NM_001291014.1"/>
</dbReference>
<dbReference type="RefSeq" id="NP_766529.3">
    <molecule id="Q5SXI5-1"/>
    <property type="nucleotide sequence ID" value="NM_172941.4"/>
</dbReference>
<dbReference type="RefSeq" id="XP_006533447.1">
    <molecule id="Q5SXI5-1"/>
    <property type="nucleotide sequence ID" value="XM_006533384.3"/>
</dbReference>
<dbReference type="RefSeq" id="XP_006533449.1">
    <molecule id="Q5SXI5-2"/>
    <property type="nucleotide sequence ID" value="XM_006533386.3"/>
</dbReference>
<dbReference type="PDB" id="2NAB">
    <property type="method" value="NMR"/>
    <property type="chains" value="A=397-434"/>
</dbReference>
<dbReference type="PDBsum" id="2NAB"/>
<dbReference type="SMR" id="Q5SXI5"/>
<dbReference type="BioGRID" id="234496">
    <property type="interactions" value="1"/>
</dbReference>
<dbReference type="FunCoup" id="Q5SXI5">
    <property type="interactions" value="1648"/>
</dbReference>
<dbReference type="IntAct" id="Q5SXI5">
    <property type="interactions" value="2"/>
</dbReference>
<dbReference type="MINT" id="Q5SXI5"/>
<dbReference type="STRING" id="10090.ENSMUSP00000013262"/>
<dbReference type="iPTMnet" id="Q5SXI5"/>
<dbReference type="PhosphoSitePlus" id="Q5SXI5"/>
<dbReference type="jPOST" id="Q5SXI5"/>
<dbReference type="PaxDb" id="10090-ENSMUSP00000013262"/>
<dbReference type="PeptideAtlas" id="Q5SXI5"/>
<dbReference type="ProteomicsDB" id="299579">
    <molecule id="Q5SXI5-1"/>
</dbReference>
<dbReference type="ProteomicsDB" id="299580">
    <molecule id="Q5SXI5-2"/>
</dbReference>
<dbReference type="ProteomicsDB" id="299581">
    <molecule id="Q5SXI5-3"/>
</dbReference>
<dbReference type="Antibodypedia" id="20839">
    <property type="antibodies" value="161 antibodies from 28 providers"/>
</dbReference>
<dbReference type="DNASU" id="268417"/>
<dbReference type="Ensembl" id="ENSMUST00000013262.15">
    <molecule id="Q5SXI5-1"/>
    <property type="protein sequence ID" value="ENSMUSP00000013262.9"/>
    <property type="gene ID" value="ENSMUSG00000020472.15"/>
</dbReference>
<dbReference type="Ensembl" id="ENSMUST00000101150.9">
    <molecule id="Q5SXI5-3"/>
    <property type="protein sequence ID" value="ENSMUSP00000098709.3"/>
    <property type="gene ID" value="ENSMUSG00000020472.15"/>
</dbReference>
<dbReference type="GeneID" id="268417"/>
<dbReference type="KEGG" id="mmu:268417"/>
<dbReference type="UCSC" id="uc007jea.2">
    <molecule id="Q5SXI5-1"/>
    <property type="organism name" value="mouse"/>
</dbReference>
<dbReference type="AGR" id="MGI:2679270"/>
<dbReference type="CTD" id="268417"/>
<dbReference type="MGI" id="MGI:2679270">
    <property type="gene designation" value="Zkscan17"/>
</dbReference>
<dbReference type="VEuPathDB" id="HostDB:ENSMUSG00000020472"/>
<dbReference type="eggNOG" id="KOG1721">
    <property type="taxonomic scope" value="Eukaryota"/>
</dbReference>
<dbReference type="GeneTree" id="ENSGT00940000161967"/>
<dbReference type="HOGENOM" id="CLU_002678_49_8_1"/>
<dbReference type="InParanoid" id="Q5SXI5"/>
<dbReference type="OMA" id="PWEIQSW"/>
<dbReference type="OrthoDB" id="6077919at2759"/>
<dbReference type="PhylomeDB" id="Q5SXI5"/>
<dbReference type="TreeFam" id="TF350829"/>
<dbReference type="Reactome" id="R-MMU-212436">
    <property type="pathway name" value="Generic Transcription Pathway"/>
</dbReference>
<dbReference type="BioGRID-ORCS" id="268417">
    <property type="hits" value="1 hit in 79 CRISPR screens"/>
</dbReference>
<dbReference type="ChiTaRS" id="Zkscan17">
    <property type="organism name" value="mouse"/>
</dbReference>
<dbReference type="PRO" id="PR:Q5SXI5"/>
<dbReference type="Proteomes" id="UP000000589">
    <property type="component" value="Chromosome 11"/>
</dbReference>
<dbReference type="RNAct" id="Q5SXI5">
    <property type="molecule type" value="protein"/>
</dbReference>
<dbReference type="Bgee" id="ENSMUSG00000020472">
    <property type="expression patterns" value="Expressed in otolith organ and 216 other cell types or tissues"/>
</dbReference>
<dbReference type="GO" id="GO:0016604">
    <property type="term" value="C:nuclear body"/>
    <property type="evidence" value="ECO:0000314"/>
    <property type="project" value="MGI"/>
</dbReference>
<dbReference type="GO" id="GO:0005634">
    <property type="term" value="C:nucleus"/>
    <property type="evidence" value="ECO:0000314"/>
    <property type="project" value="MGI"/>
</dbReference>
<dbReference type="GO" id="GO:0003677">
    <property type="term" value="F:DNA binding"/>
    <property type="evidence" value="ECO:0000314"/>
    <property type="project" value="MGI"/>
</dbReference>
<dbReference type="GO" id="GO:0042802">
    <property type="term" value="F:identical protein binding"/>
    <property type="evidence" value="ECO:0000314"/>
    <property type="project" value="MGI"/>
</dbReference>
<dbReference type="GO" id="GO:0008270">
    <property type="term" value="F:zinc ion binding"/>
    <property type="evidence" value="ECO:0007669"/>
    <property type="project" value="UniProtKB-KW"/>
</dbReference>
<dbReference type="GO" id="GO:0000122">
    <property type="term" value="P:negative regulation of transcription by RNA polymerase II"/>
    <property type="evidence" value="ECO:0000314"/>
    <property type="project" value="MGI"/>
</dbReference>
<dbReference type="GO" id="GO:0045893">
    <property type="term" value="P:positive regulation of DNA-templated transcription"/>
    <property type="evidence" value="ECO:0000314"/>
    <property type="project" value="UniProtKB"/>
</dbReference>
<dbReference type="CDD" id="cd07936">
    <property type="entry name" value="SCAN"/>
    <property type="match status" value="1"/>
</dbReference>
<dbReference type="FunFam" id="3.30.160.60:FF:005126">
    <property type="match status" value="1"/>
</dbReference>
<dbReference type="FunFam" id="1.10.4020.10:FF:000001">
    <property type="entry name" value="zinc finger protein 263 isoform X1"/>
    <property type="match status" value="1"/>
</dbReference>
<dbReference type="FunFam" id="3.30.160.60:FF:001511">
    <property type="entry name" value="Zinc finger protein 496"/>
    <property type="match status" value="1"/>
</dbReference>
<dbReference type="FunFam" id="3.30.160.60:FF:001512">
    <property type="entry name" value="Zinc finger protein 496"/>
    <property type="match status" value="1"/>
</dbReference>
<dbReference type="FunFam" id="3.30.160.60:FF:001758">
    <property type="entry name" value="Zinc finger protein 496"/>
    <property type="match status" value="1"/>
</dbReference>
<dbReference type="Gene3D" id="3.30.160.60">
    <property type="entry name" value="Classic Zinc Finger"/>
    <property type="match status" value="4"/>
</dbReference>
<dbReference type="Gene3D" id="1.10.4020.10">
    <property type="entry name" value="DNA breaking-rejoining enzymes"/>
    <property type="match status" value="1"/>
</dbReference>
<dbReference type="InterPro" id="IPR001909">
    <property type="entry name" value="KRAB"/>
</dbReference>
<dbReference type="InterPro" id="IPR036051">
    <property type="entry name" value="KRAB_dom_sf"/>
</dbReference>
<dbReference type="InterPro" id="IPR003309">
    <property type="entry name" value="SCAN_dom"/>
</dbReference>
<dbReference type="InterPro" id="IPR038269">
    <property type="entry name" value="SCAN_sf"/>
</dbReference>
<dbReference type="InterPro" id="IPR036236">
    <property type="entry name" value="Znf_C2H2_sf"/>
</dbReference>
<dbReference type="InterPro" id="IPR013087">
    <property type="entry name" value="Znf_C2H2_type"/>
</dbReference>
<dbReference type="PANTHER" id="PTHR23226">
    <property type="entry name" value="ZINC FINGER AND SCAN DOMAIN-CONTAINING"/>
    <property type="match status" value="1"/>
</dbReference>
<dbReference type="PANTHER" id="PTHR23226:SF180">
    <property type="entry name" value="ZINC FINGER PROTEIN 496"/>
    <property type="match status" value="1"/>
</dbReference>
<dbReference type="Pfam" id="PF01352">
    <property type="entry name" value="KRAB"/>
    <property type="match status" value="1"/>
</dbReference>
<dbReference type="Pfam" id="PF02023">
    <property type="entry name" value="SCAN"/>
    <property type="match status" value="1"/>
</dbReference>
<dbReference type="Pfam" id="PF00096">
    <property type="entry name" value="zf-C2H2"/>
    <property type="match status" value="4"/>
</dbReference>
<dbReference type="SMART" id="SM00431">
    <property type="entry name" value="SCAN"/>
    <property type="match status" value="1"/>
</dbReference>
<dbReference type="SMART" id="SM00355">
    <property type="entry name" value="ZnF_C2H2"/>
    <property type="match status" value="5"/>
</dbReference>
<dbReference type="SUPFAM" id="SSF57667">
    <property type="entry name" value="beta-beta-alpha zinc fingers"/>
    <property type="match status" value="3"/>
</dbReference>
<dbReference type="SUPFAM" id="SSF109640">
    <property type="entry name" value="KRAB domain (Kruppel-associated box)"/>
    <property type="match status" value="1"/>
</dbReference>
<dbReference type="SUPFAM" id="SSF47353">
    <property type="entry name" value="Retrovirus capsid dimerization domain-like"/>
    <property type="match status" value="1"/>
</dbReference>
<dbReference type="PROSITE" id="PS50805">
    <property type="entry name" value="KRAB"/>
    <property type="match status" value="1"/>
</dbReference>
<dbReference type="PROSITE" id="PS50804">
    <property type="entry name" value="SCAN_BOX"/>
    <property type="match status" value="1"/>
</dbReference>
<dbReference type="PROSITE" id="PS00028">
    <property type="entry name" value="ZINC_FINGER_C2H2_1"/>
    <property type="match status" value="4"/>
</dbReference>
<dbReference type="PROSITE" id="PS50157">
    <property type="entry name" value="ZINC_FINGER_C2H2_2"/>
    <property type="match status" value="5"/>
</dbReference>